<evidence type="ECO:0000250" key="1">
    <source>
        <dbReference type="UniProtKB" id="P44654"/>
    </source>
</evidence>
<evidence type="ECO:0000250" key="2">
    <source>
        <dbReference type="UniProtKB" id="Q53177"/>
    </source>
</evidence>
<evidence type="ECO:0000255" key="3"/>
<evidence type="ECO:0000269" key="4">
    <source>
    </source>
</evidence>
<evidence type="ECO:0000305" key="5"/>
<evidence type="ECO:0000312" key="6">
    <source>
        <dbReference type="EMBL" id="AAC79444.1"/>
    </source>
</evidence>
<evidence type="ECO:0000312" key="7">
    <source>
        <dbReference type="EMBL" id="AAD46690.1"/>
    </source>
</evidence>
<organism>
    <name type="scientific">Neorhizobium galegae</name>
    <name type="common">Rhizobium galegae</name>
    <dbReference type="NCBI Taxonomy" id="399"/>
    <lineage>
        <taxon>Bacteria</taxon>
        <taxon>Pseudomonadati</taxon>
        <taxon>Pseudomonadota</taxon>
        <taxon>Alphaproteobacteria</taxon>
        <taxon>Hyphomicrobiales</taxon>
        <taxon>Rhizobiaceae</taxon>
        <taxon>Rhizobium/Agrobacterium group</taxon>
        <taxon>Neorhizobium</taxon>
    </lineage>
</organism>
<accession>Q9Z3W3</accession>
<gene>
    <name evidence="6" type="primary">napB</name>
</gene>
<sequence length="163" mass="18244">MRSQDPSRRLSRRLWTLFALALCLVTGTVALAQTVPQLSGRPSPMQNTGADPLPRWIVDDIQKMRNYPDQPPVIPHSIEGYQLSVNTNRCMSCHRRELTEGSGAPMISVTHYMNREGQMLADVSPRRYFCTACHVPQADTRPLVDNTFKDMSELGFKPAGSGQ</sequence>
<feature type="signal peptide" evidence="3">
    <location>
        <begin position="1"/>
        <end position="32"/>
    </location>
</feature>
<feature type="chain" id="PRO_0000417030" description="Periplasmic nitrate reductase, electron transfer subunit">
    <location>
        <begin position="33"/>
        <end position="163"/>
    </location>
</feature>
<feature type="binding site" description="axial binding residue" evidence="1">
    <location>
        <position position="76"/>
    </location>
    <ligand>
        <name>heme c</name>
        <dbReference type="ChEBI" id="CHEBI:61717"/>
        <label>1</label>
    </ligand>
    <ligandPart>
        <name>Fe</name>
        <dbReference type="ChEBI" id="CHEBI:18248"/>
    </ligandPart>
</feature>
<feature type="binding site" description="covalent" evidence="1">
    <location>
        <position position="90"/>
    </location>
    <ligand>
        <name>heme c</name>
        <dbReference type="ChEBI" id="CHEBI:61717"/>
        <label>1</label>
    </ligand>
</feature>
<feature type="binding site" description="covalent" evidence="1">
    <location>
        <position position="93"/>
    </location>
    <ligand>
        <name>heme c</name>
        <dbReference type="ChEBI" id="CHEBI:61717"/>
        <label>1</label>
    </ligand>
</feature>
<feature type="binding site" description="axial binding residue" evidence="1">
    <location>
        <position position="94"/>
    </location>
    <ligand>
        <name>heme c</name>
        <dbReference type="ChEBI" id="CHEBI:61717"/>
        <label>1</label>
    </ligand>
    <ligandPart>
        <name>Fe</name>
        <dbReference type="ChEBI" id="CHEBI:18248"/>
    </ligandPart>
</feature>
<feature type="binding site" description="axial binding residue" evidence="1">
    <location>
        <position position="111"/>
    </location>
    <ligand>
        <name>heme c</name>
        <dbReference type="ChEBI" id="CHEBI:61717"/>
        <label>2</label>
    </ligand>
    <ligandPart>
        <name>Fe</name>
        <dbReference type="ChEBI" id="CHEBI:18248"/>
    </ligandPart>
</feature>
<feature type="binding site" description="covalent" evidence="1">
    <location>
        <position position="130"/>
    </location>
    <ligand>
        <name>heme c</name>
        <dbReference type="ChEBI" id="CHEBI:61717"/>
        <label>2</label>
    </ligand>
</feature>
<feature type="binding site" description="covalent" evidence="1">
    <location>
        <position position="133"/>
    </location>
    <ligand>
        <name>heme c</name>
        <dbReference type="ChEBI" id="CHEBI:61717"/>
        <label>2</label>
    </ligand>
</feature>
<feature type="binding site" description="axial binding residue" evidence="1">
    <location>
        <position position="134"/>
    </location>
    <ligand>
        <name>heme c</name>
        <dbReference type="ChEBI" id="CHEBI:61717"/>
        <label>2</label>
    </ligand>
    <ligandPart>
        <name>Fe</name>
        <dbReference type="ChEBI" id="CHEBI:18248"/>
    </ligandPart>
</feature>
<protein>
    <recommendedName>
        <fullName>Periplasmic nitrate reductase, electron transfer subunit</fullName>
    </recommendedName>
    <alternativeName>
        <fullName evidence="2 7">Diheme cytochrome c NapB</fullName>
    </alternativeName>
</protein>
<keyword id="KW-0249">Electron transport</keyword>
<keyword id="KW-0349">Heme</keyword>
<keyword id="KW-0408">Iron</keyword>
<keyword id="KW-0479">Metal-binding</keyword>
<keyword id="KW-0574">Periplasm</keyword>
<keyword id="KW-0732">Signal</keyword>
<keyword id="KW-0813">Transport</keyword>
<proteinExistence type="inferred from homology"/>
<comment type="function">
    <text evidence="4">Electron transfer subunit of the periplasmic nitrate reductase complex NapAB. Receives electrons from the membrane-anchored tetraheme c-type NapC protein and transfers these to NapA subunit, thus allowing electron flow between membrane and periplasm. Essential for periplasmic nitrate reduction with nitrate as the terminal electron acceptor.</text>
</comment>
<comment type="subunit">
    <text evidence="2">Component of the periplasmic nitrate reductase NapAB complex composed of NapA and NapB.</text>
</comment>
<comment type="subcellular location">
    <subcellularLocation>
        <location evidence="4">Periplasm</location>
    </subcellularLocation>
</comment>
<comment type="PTM">
    <text evidence="2">Binds 2 heme C groups per subunit.</text>
</comment>
<comment type="similarity">
    <text evidence="3">Belongs to the NapB family.</text>
</comment>
<name>NAPB_NEOGA</name>
<reference evidence="5 6" key="1">
    <citation type="journal article" date="1999" name="J. Bacteriol.">
        <title>The periplasmic nitrate reductase in Pseudomonas sp. strain G-179 catalyzes the first step of denitrification.</title>
        <authorList>
            <person name="Bedzyk L."/>
            <person name="Wang T."/>
            <person name="Ye R.W."/>
        </authorList>
    </citation>
    <scope>NUCLEOTIDE SEQUENCE [GENOMIC DNA]</scope>
    <scope>FUNCTION</scope>
    <scope>SUBCELLULAR LOCATION</scope>
    <source>
        <strain evidence="6">G-179</strain>
    </source>
</reference>
<dbReference type="EMBL" id="AF040988">
    <property type="protein sequence ID" value="AAD46690.1"/>
    <property type="molecule type" value="Genomic_DNA"/>
</dbReference>
<dbReference type="EMBL" id="AF083948">
    <property type="protein sequence ID" value="AAC79444.1"/>
    <property type="molecule type" value="Genomic_DNA"/>
</dbReference>
<dbReference type="SMR" id="Q9Z3W3"/>
<dbReference type="GO" id="GO:0042597">
    <property type="term" value="C:periplasmic space"/>
    <property type="evidence" value="ECO:0007669"/>
    <property type="project" value="UniProtKB-SubCell"/>
</dbReference>
<dbReference type="GO" id="GO:0046872">
    <property type="term" value="F:metal ion binding"/>
    <property type="evidence" value="ECO:0007669"/>
    <property type="project" value="UniProtKB-KW"/>
</dbReference>
<dbReference type="GO" id="GO:0009061">
    <property type="term" value="P:anaerobic respiration"/>
    <property type="evidence" value="ECO:0007669"/>
    <property type="project" value="InterPro"/>
</dbReference>
<dbReference type="FunFam" id="1.10.1130.10:FF:000001">
    <property type="entry name" value="Periplasmic nitrate reductase, electron transfer subunit"/>
    <property type="match status" value="1"/>
</dbReference>
<dbReference type="Gene3D" id="1.10.1130.10">
    <property type="entry name" value="Flavocytochrome C3, Chain A"/>
    <property type="match status" value="1"/>
</dbReference>
<dbReference type="InterPro" id="IPR036280">
    <property type="entry name" value="Multihaem_cyt_sf"/>
</dbReference>
<dbReference type="InterPro" id="IPR005591">
    <property type="entry name" value="NapB"/>
</dbReference>
<dbReference type="PANTHER" id="PTHR38604">
    <property type="entry name" value="PERIPLASMIC NITRATE REDUCTASE, ELECTRON TRANSFER SUBUNIT"/>
    <property type="match status" value="1"/>
</dbReference>
<dbReference type="PANTHER" id="PTHR38604:SF1">
    <property type="entry name" value="PERIPLASMIC NITRATE REDUCTASE, ELECTRON TRANSFER SUBUNIT"/>
    <property type="match status" value="1"/>
</dbReference>
<dbReference type="Pfam" id="PF03892">
    <property type="entry name" value="NapB"/>
    <property type="match status" value="1"/>
</dbReference>
<dbReference type="PIRSF" id="PIRSF006105">
    <property type="entry name" value="NapB"/>
    <property type="match status" value="1"/>
</dbReference>
<dbReference type="SUPFAM" id="SSF48695">
    <property type="entry name" value="Multiheme cytochromes"/>
    <property type="match status" value="1"/>
</dbReference>
<dbReference type="PROSITE" id="PS51008">
    <property type="entry name" value="MULTIHEME_CYTC"/>
    <property type="match status" value="1"/>
</dbReference>